<keyword id="KW-0028">Amino-acid biosynthesis</keyword>
<keyword id="KW-0057">Aromatic amino acid biosynthesis</keyword>
<keyword id="KW-0521">NADP</keyword>
<keyword id="KW-0560">Oxidoreductase</keyword>
<keyword id="KW-1185">Reference proteome</keyword>
<gene>
    <name evidence="1" type="primary">aroE</name>
    <name type="ordered locus">Anae109_0205</name>
</gene>
<feature type="chain" id="PRO_0000325099" description="Shikimate dehydrogenase (NADP(+))">
    <location>
        <begin position="1"/>
        <end position="279"/>
    </location>
</feature>
<feature type="active site" description="Proton acceptor" evidence="1">
    <location>
        <position position="70"/>
    </location>
</feature>
<feature type="binding site" evidence="1">
    <location>
        <begin position="19"/>
        <end position="21"/>
    </location>
    <ligand>
        <name>shikimate</name>
        <dbReference type="ChEBI" id="CHEBI:36208"/>
    </ligand>
</feature>
<feature type="binding site" evidence="1">
    <location>
        <position position="66"/>
    </location>
    <ligand>
        <name>shikimate</name>
        <dbReference type="ChEBI" id="CHEBI:36208"/>
    </ligand>
</feature>
<feature type="binding site" evidence="1">
    <location>
        <position position="91"/>
    </location>
    <ligand>
        <name>shikimate</name>
        <dbReference type="ChEBI" id="CHEBI:36208"/>
    </ligand>
</feature>
<feature type="binding site" evidence="1">
    <location>
        <position position="106"/>
    </location>
    <ligand>
        <name>shikimate</name>
        <dbReference type="ChEBI" id="CHEBI:36208"/>
    </ligand>
</feature>
<feature type="binding site" evidence="1">
    <location>
        <begin position="129"/>
        <end position="133"/>
    </location>
    <ligand>
        <name>NADP(+)</name>
        <dbReference type="ChEBI" id="CHEBI:58349"/>
    </ligand>
</feature>
<feature type="binding site" evidence="1">
    <location>
        <position position="222"/>
    </location>
    <ligand>
        <name>NADP(+)</name>
        <dbReference type="ChEBI" id="CHEBI:58349"/>
    </ligand>
</feature>
<feature type="binding site" evidence="1">
    <location>
        <position position="224"/>
    </location>
    <ligand>
        <name>shikimate</name>
        <dbReference type="ChEBI" id="CHEBI:36208"/>
    </ligand>
</feature>
<feature type="binding site" evidence="1">
    <location>
        <position position="243"/>
    </location>
    <ligand>
        <name>NADP(+)</name>
        <dbReference type="ChEBI" id="CHEBI:58349"/>
    </ligand>
</feature>
<accession>A7H6S7</accession>
<name>AROE_ANADF</name>
<dbReference type="EC" id="1.1.1.25" evidence="1"/>
<dbReference type="EMBL" id="CP000769">
    <property type="protein sequence ID" value="ABS24423.1"/>
    <property type="molecule type" value="Genomic_DNA"/>
</dbReference>
<dbReference type="RefSeq" id="WP_011984529.1">
    <property type="nucleotide sequence ID" value="NC_009675.1"/>
</dbReference>
<dbReference type="SMR" id="A7H6S7"/>
<dbReference type="STRING" id="404589.Anae109_0205"/>
<dbReference type="KEGG" id="afw:Anae109_0205"/>
<dbReference type="eggNOG" id="COG0169">
    <property type="taxonomic scope" value="Bacteria"/>
</dbReference>
<dbReference type="HOGENOM" id="CLU_044063_4_1_7"/>
<dbReference type="OrthoDB" id="9792692at2"/>
<dbReference type="UniPathway" id="UPA00053">
    <property type="reaction ID" value="UER00087"/>
</dbReference>
<dbReference type="Proteomes" id="UP000006382">
    <property type="component" value="Chromosome"/>
</dbReference>
<dbReference type="GO" id="GO:0004764">
    <property type="term" value="F:shikimate 3-dehydrogenase (NADP+) activity"/>
    <property type="evidence" value="ECO:0007669"/>
    <property type="project" value="UniProtKB-UniRule"/>
</dbReference>
<dbReference type="GO" id="GO:0008652">
    <property type="term" value="P:amino acid biosynthetic process"/>
    <property type="evidence" value="ECO:0007669"/>
    <property type="project" value="UniProtKB-KW"/>
</dbReference>
<dbReference type="GO" id="GO:0009073">
    <property type="term" value="P:aromatic amino acid family biosynthetic process"/>
    <property type="evidence" value="ECO:0007669"/>
    <property type="project" value="UniProtKB-KW"/>
</dbReference>
<dbReference type="GO" id="GO:0009423">
    <property type="term" value="P:chorismate biosynthetic process"/>
    <property type="evidence" value="ECO:0007669"/>
    <property type="project" value="UniProtKB-UniRule"/>
</dbReference>
<dbReference type="GO" id="GO:0019632">
    <property type="term" value="P:shikimate metabolic process"/>
    <property type="evidence" value="ECO:0007669"/>
    <property type="project" value="TreeGrafter"/>
</dbReference>
<dbReference type="Gene3D" id="3.40.50.10860">
    <property type="entry name" value="Leucine Dehydrogenase, chain A, domain 1"/>
    <property type="match status" value="1"/>
</dbReference>
<dbReference type="Gene3D" id="3.40.50.720">
    <property type="entry name" value="NAD(P)-binding Rossmann-like Domain"/>
    <property type="match status" value="1"/>
</dbReference>
<dbReference type="HAMAP" id="MF_00222">
    <property type="entry name" value="Shikimate_DH_AroE"/>
    <property type="match status" value="1"/>
</dbReference>
<dbReference type="InterPro" id="IPR046346">
    <property type="entry name" value="Aminoacid_DH-like_N_sf"/>
</dbReference>
<dbReference type="InterPro" id="IPR036291">
    <property type="entry name" value="NAD(P)-bd_dom_sf"/>
</dbReference>
<dbReference type="InterPro" id="IPR041121">
    <property type="entry name" value="SDH_C"/>
</dbReference>
<dbReference type="InterPro" id="IPR013708">
    <property type="entry name" value="Shikimate_DH-bd_N"/>
</dbReference>
<dbReference type="InterPro" id="IPR022893">
    <property type="entry name" value="Shikimate_DH_fam"/>
</dbReference>
<dbReference type="PANTHER" id="PTHR21089:SF1">
    <property type="entry name" value="BIFUNCTIONAL 3-DEHYDROQUINATE DEHYDRATASE_SHIKIMATE DEHYDROGENASE, CHLOROPLASTIC"/>
    <property type="match status" value="1"/>
</dbReference>
<dbReference type="PANTHER" id="PTHR21089">
    <property type="entry name" value="SHIKIMATE DEHYDROGENASE"/>
    <property type="match status" value="1"/>
</dbReference>
<dbReference type="Pfam" id="PF18317">
    <property type="entry name" value="SDH_C"/>
    <property type="match status" value="1"/>
</dbReference>
<dbReference type="Pfam" id="PF08501">
    <property type="entry name" value="Shikimate_dh_N"/>
    <property type="match status" value="1"/>
</dbReference>
<dbReference type="SUPFAM" id="SSF53223">
    <property type="entry name" value="Aminoacid dehydrogenase-like, N-terminal domain"/>
    <property type="match status" value="1"/>
</dbReference>
<dbReference type="SUPFAM" id="SSF51735">
    <property type="entry name" value="NAD(P)-binding Rossmann-fold domains"/>
    <property type="match status" value="1"/>
</dbReference>
<organism>
    <name type="scientific">Anaeromyxobacter sp. (strain Fw109-5)</name>
    <dbReference type="NCBI Taxonomy" id="404589"/>
    <lineage>
        <taxon>Bacteria</taxon>
        <taxon>Pseudomonadati</taxon>
        <taxon>Myxococcota</taxon>
        <taxon>Myxococcia</taxon>
        <taxon>Myxococcales</taxon>
        <taxon>Cystobacterineae</taxon>
        <taxon>Anaeromyxobacteraceae</taxon>
        <taxon>Anaeromyxobacter</taxon>
    </lineage>
</organism>
<comment type="function">
    <text evidence="1">Involved in the biosynthesis of the chorismate, which leads to the biosynthesis of aromatic amino acids. Catalyzes the reversible NADPH linked reduction of 3-dehydroshikimate (DHSA) to yield shikimate (SA).</text>
</comment>
<comment type="catalytic activity">
    <reaction evidence="1">
        <text>shikimate + NADP(+) = 3-dehydroshikimate + NADPH + H(+)</text>
        <dbReference type="Rhea" id="RHEA:17737"/>
        <dbReference type="ChEBI" id="CHEBI:15378"/>
        <dbReference type="ChEBI" id="CHEBI:16630"/>
        <dbReference type="ChEBI" id="CHEBI:36208"/>
        <dbReference type="ChEBI" id="CHEBI:57783"/>
        <dbReference type="ChEBI" id="CHEBI:58349"/>
        <dbReference type="EC" id="1.1.1.25"/>
    </reaction>
</comment>
<comment type="pathway">
    <text evidence="1">Metabolic intermediate biosynthesis; chorismate biosynthesis; chorismate from D-erythrose 4-phosphate and phosphoenolpyruvate: step 4/7.</text>
</comment>
<comment type="subunit">
    <text evidence="1">Homodimer.</text>
</comment>
<comment type="similarity">
    <text evidence="1">Belongs to the shikimate dehydrogenase family.</text>
</comment>
<protein>
    <recommendedName>
        <fullName evidence="1">Shikimate dehydrogenase (NADP(+))</fullName>
        <shortName evidence="1">SDH</shortName>
        <ecNumber evidence="1">1.1.1.25</ecNumber>
    </recommendedName>
</protein>
<sequence length="279" mass="28596">MITGRTALYGVLGNPVRHSRSPQMQAAAFEHLGLDATYVALPVEPERLPAAVAGAHALGFQGLNVTVPHKRAVVALCEAVDPVAREVGAVNTLRRTERGWEGFNTDAAACLMLLREEGLRPGAPALLAGAGGAARAAAWALVRAGAVLRIAARRQDAAERLAAELGPLAGPGTPAPVAVPWGALEAEADAAEAVVNGTTVGLHPEDAPLPLRVRAGQLVADFVYGDTPLARAARDAGARLVSGERILVRQGALSFALWTGRAAPEALMAAAIAAPGRAT</sequence>
<reference key="1">
    <citation type="journal article" date="2015" name="Genome Announc.">
        <title>Complete genome sequence of Anaeromyxobacter sp. Fw109-5, an anaerobic, metal-reducing bacterium isolated from a contaminated subsurface environment.</title>
        <authorList>
            <person name="Hwang C."/>
            <person name="Copeland A."/>
            <person name="Lucas S."/>
            <person name="Lapidus A."/>
            <person name="Barry K."/>
            <person name="Glavina Del Rio T."/>
            <person name="Dalin E."/>
            <person name="Tice H."/>
            <person name="Pitluck S."/>
            <person name="Sims D."/>
            <person name="Brettin T."/>
            <person name="Bruce D.C."/>
            <person name="Detter J.C."/>
            <person name="Han C.S."/>
            <person name="Schmutz J."/>
            <person name="Larimer F.W."/>
            <person name="Land M.L."/>
            <person name="Hauser L.J."/>
            <person name="Kyrpides N."/>
            <person name="Lykidis A."/>
            <person name="Richardson P."/>
            <person name="Belieav A."/>
            <person name="Sanford R.A."/>
            <person name="Loeffler F.E."/>
            <person name="Fields M.W."/>
        </authorList>
    </citation>
    <scope>NUCLEOTIDE SEQUENCE [LARGE SCALE GENOMIC DNA]</scope>
    <source>
        <strain>Fw109-5</strain>
    </source>
</reference>
<evidence type="ECO:0000255" key="1">
    <source>
        <dbReference type="HAMAP-Rule" id="MF_00222"/>
    </source>
</evidence>
<proteinExistence type="inferred from homology"/>